<comment type="function">
    <text evidence="1">Facilitates the functional incorporation of the urease nickel metallocenter. This process requires GTP hydrolysis, probably effectuated by UreG.</text>
</comment>
<comment type="subunit">
    <text evidence="1">Homodimer. UreD, UreF and UreG form a complex that acts as a GTP-hydrolysis-dependent molecular chaperone, activating the urease apoprotein by helping to assemble the nickel containing metallocenter of UreC. The UreE protein probably delivers the nickel.</text>
</comment>
<comment type="subcellular location">
    <subcellularLocation>
        <location evidence="1">Cytoplasm</location>
    </subcellularLocation>
</comment>
<comment type="similarity">
    <text evidence="1">Belongs to the SIMIBI class G3E GTPase family. UreG subfamily.</text>
</comment>
<organism>
    <name type="scientific">Synechocystis sp. (strain ATCC 27184 / PCC 6803 / Kazusa)</name>
    <dbReference type="NCBI Taxonomy" id="1111708"/>
    <lineage>
        <taxon>Bacteria</taxon>
        <taxon>Bacillati</taxon>
        <taxon>Cyanobacteriota</taxon>
        <taxon>Cyanophyceae</taxon>
        <taxon>Synechococcales</taxon>
        <taxon>Merismopediaceae</taxon>
        <taxon>Synechocystis</taxon>
    </lineage>
</organism>
<sequence length="206" mass="22013">MAQTPLRIGIAGPVGSGKTALLEALCKALRQKYQLAVVTNDIYTQEDAQFLVRAEALTPDRILGVETGGCPHTAIREDASLNLAAIADLEARFMPLDMVFLESGGDNLAATFSPELVDLTLYVIDVAAGDKIPRKGGPGITKSDLLVINKIDLAPMVGADLGIMDRDAKKMRGEKPFVFTNLKTATGLSTVVDFVEHYLPTKVLAS</sequence>
<reference key="1">
    <citation type="journal article" date="1996" name="DNA Res.">
        <title>Sequence analysis of the genome of the unicellular cyanobacterium Synechocystis sp. strain PCC6803. II. Sequence determination of the entire genome and assignment of potential protein-coding regions.</title>
        <authorList>
            <person name="Kaneko T."/>
            <person name="Sato S."/>
            <person name="Kotani H."/>
            <person name="Tanaka A."/>
            <person name="Asamizu E."/>
            <person name="Nakamura Y."/>
            <person name="Miyajima N."/>
            <person name="Hirosawa M."/>
            <person name="Sugiura M."/>
            <person name="Sasamoto S."/>
            <person name="Kimura T."/>
            <person name="Hosouchi T."/>
            <person name="Matsuno A."/>
            <person name="Muraki A."/>
            <person name="Nakazaki N."/>
            <person name="Naruo K."/>
            <person name="Okumura S."/>
            <person name="Shimpo S."/>
            <person name="Takeuchi C."/>
            <person name="Wada T."/>
            <person name="Watanabe A."/>
            <person name="Yamada M."/>
            <person name="Yasuda M."/>
            <person name="Tabata S."/>
        </authorList>
    </citation>
    <scope>NUCLEOTIDE SEQUENCE [LARGE SCALE GENOMIC DNA]</scope>
    <source>
        <strain>ATCC 27184 / PCC 6803 / Kazusa</strain>
    </source>
</reference>
<accession>P72955</accession>
<evidence type="ECO:0000255" key="1">
    <source>
        <dbReference type="HAMAP-Rule" id="MF_01389"/>
    </source>
</evidence>
<dbReference type="EMBL" id="BA000022">
    <property type="protein sequence ID" value="BAA16973.1"/>
    <property type="molecule type" value="Genomic_DNA"/>
</dbReference>
<dbReference type="PIR" id="S74933">
    <property type="entry name" value="S74933"/>
</dbReference>
<dbReference type="SMR" id="P72955"/>
<dbReference type="STRING" id="1148.gene:10497833"/>
<dbReference type="PaxDb" id="1148-1652048"/>
<dbReference type="EnsemblBacteria" id="BAA16973">
    <property type="protein sequence ID" value="BAA16973"/>
    <property type="gene ID" value="BAA16973"/>
</dbReference>
<dbReference type="KEGG" id="syn:sll0643"/>
<dbReference type="eggNOG" id="COG0378">
    <property type="taxonomic scope" value="Bacteria"/>
</dbReference>
<dbReference type="InParanoid" id="P72955"/>
<dbReference type="PhylomeDB" id="P72955"/>
<dbReference type="Proteomes" id="UP000001425">
    <property type="component" value="Chromosome"/>
</dbReference>
<dbReference type="GO" id="GO:0005737">
    <property type="term" value="C:cytoplasm"/>
    <property type="evidence" value="ECO:0007669"/>
    <property type="project" value="UniProtKB-SubCell"/>
</dbReference>
<dbReference type="GO" id="GO:0005525">
    <property type="term" value="F:GTP binding"/>
    <property type="evidence" value="ECO:0007669"/>
    <property type="project" value="UniProtKB-KW"/>
</dbReference>
<dbReference type="GO" id="GO:0003924">
    <property type="term" value="F:GTPase activity"/>
    <property type="evidence" value="ECO:0007669"/>
    <property type="project" value="InterPro"/>
</dbReference>
<dbReference type="GO" id="GO:0016151">
    <property type="term" value="F:nickel cation binding"/>
    <property type="evidence" value="ECO:0007669"/>
    <property type="project" value="UniProtKB-UniRule"/>
</dbReference>
<dbReference type="GO" id="GO:0043419">
    <property type="term" value="P:urea catabolic process"/>
    <property type="evidence" value="ECO:0007669"/>
    <property type="project" value="InterPro"/>
</dbReference>
<dbReference type="CDD" id="cd05540">
    <property type="entry name" value="UreG"/>
    <property type="match status" value="1"/>
</dbReference>
<dbReference type="FunFam" id="3.40.50.300:FF:000208">
    <property type="entry name" value="Urease accessory protein UreG"/>
    <property type="match status" value="1"/>
</dbReference>
<dbReference type="Gene3D" id="3.40.50.300">
    <property type="entry name" value="P-loop containing nucleotide triphosphate hydrolases"/>
    <property type="match status" value="1"/>
</dbReference>
<dbReference type="HAMAP" id="MF_01389">
    <property type="entry name" value="UreG"/>
    <property type="match status" value="1"/>
</dbReference>
<dbReference type="InterPro" id="IPR003495">
    <property type="entry name" value="CobW/HypB/UreG_nucleotide-bd"/>
</dbReference>
<dbReference type="InterPro" id="IPR027417">
    <property type="entry name" value="P-loop_NTPase"/>
</dbReference>
<dbReference type="InterPro" id="IPR004400">
    <property type="entry name" value="UreG"/>
</dbReference>
<dbReference type="NCBIfam" id="TIGR00101">
    <property type="entry name" value="ureG"/>
    <property type="match status" value="1"/>
</dbReference>
<dbReference type="PANTHER" id="PTHR31715">
    <property type="entry name" value="UREASE ACCESSORY PROTEIN G"/>
    <property type="match status" value="1"/>
</dbReference>
<dbReference type="PANTHER" id="PTHR31715:SF0">
    <property type="entry name" value="UREASE ACCESSORY PROTEIN G"/>
    <property type="match status" value="1"/>
</dbReference>
<dbReference type="Pfam" id="PF02492">
    <property type="entry name" value="cobW"/>
    <property type="match status" value="1"/>
</dbReference>
<dbReference type="PIRSF" id="PIRSF005624">
    <property type="entry name" value="Ni-bind_GTPase"/>
    <property type="match status" value="1"/>
</dbReference>
<dbReference type="SUPFAM" id="SSF52540">
    <property type="entry name" value="P-loop containing nucleoside triphosphate hydrolases"/>
    <property type="match status" value="1"/>
</dbReference>
<name>UREG_SYNY3</name>
<feature type="chain" id="PRO_0000067674" description="Urease accessory protein UreG">
    <location>
        <begin position="1"/>
        <end position="206"/>
    </location>
</feature>
<feature type="binding site" evidence="1">
    <location>
        <begin position="12"/>
        <end position="19"/>
    </location>
    <ligand>
        <name>GTP</name>
        <dbReference type="ChEBI" id="CHEBI:37565"/>
    </ligand>
</feature>
<protein>
    <recommendedName>
        <fullName evidence="1">Urease accessory protein UreG</fullName>
    </recommendedName>
</protein>
<keyword id="KW-0143">Chaperone</keyword>
<keyword id="KW-0963">Cytoplasm</keyword>
<keyword id="KW-0342">GTP-binding</keyword>
<keyword id="KW-0996">Nickel insertion</keyword>
<keyword id="KW-0547">Nucleotide-binding</keyword>
<keyword id="KW-1185">Reference proteome</keyword>
<gene>
    <name evidence="1" type="primary">ureG</name>
    <name type="ordered locus">sll0643</name>
</gene>
<proteinExistence type="inferred from homology"/>